<sequence>MPNSTTEDSVAVPLLPSLRRATNSTSQVAIVGANVCPIESLDYEIAENDFFKQDWRGRSKVEIFQYVFMKWLLCFCIGIIVSLIGFANNLAVENLAGVKFVVTSNMMIAGRFAMGFVVFSVTNLILTLFASVITAFVAPAAAGSGIPEVKAYLNGVDAPEIFSLRTLIIKIIGNISAVSASLLIGKAGPMVHTGACVASILGQGGSKRYRLTWRWLRFFKNDRDRRDLVTCGAAAGIAASFRAPVGGVLFALEEMSSWWRSALLWRIFFSTAVVAIVLRALIDVCLSGKCGLFGKGGLIMFDVYSENASYHLGDVLPVLLLGVVGGILGSLYNFLLDKVLRAYNYIYEKGVTWKILLACAISIFTSCLLFGLPFLASCQPCPVDALEECPTIGRSGNFKKYQCPPGHYNDLASLIFNTNDDAIKNLFSKNTDFEFHYFSVLVFFVTCFFLSIFSYGIVAPAGLFVPVIVTGASYGRFVGMLLGSNSNLNHGLFAVLGAASFLGGTMRMTVSTCVILLELTNNLLLLPMMMVVLLISKTVADGFNANIYNLIMKLKGFPYLYSHAEPYMRQLLVGDVVTGPLQVFNGIEKVETIVHVLKTTNHNGFPVVDGPPLAAAPVLHGLILRAHILTLLKKRVFMPSPVACDSNTLSQFKAEEFAKKGSGRSDKIEDVELSEEELNMYLDLHPFSNASPYTVVETMSLAKALILFREVGIRHLLVIPKTSNRPPVVGILTRHDFMPEHILGLHPSVSRSKWKRLRIRLPFFS</sequence>
<dbReference type="EMBL" id="AC051625">
    <property type="status" value="NOT_ANNOTATED_CDS"/>
    <property type="molecule type" value="Genomic_DNA"/>
</dbReference>
<dbReference type="EMBL" id="AC069557">
    <property type="status" value="NOT_ANNOTATED_CDS"/>
    <property type="molecule type" value="Genomic_DNA"/>
</dbReference>
<dbReference type="EMBL" id="CP002688">
    <property type="protein sequence ID" value="AED93891.1"/>
    <property type="molecule type" value="Genomic_DNA"/>
</dbReference>
<dbReference type="RefSeq" id="NP_198313.2">
    <property type="nucleotide sequence ID" value="NM_122852.4"/>
</dbReference>
<dbReference type="SMR" id="P60300"/>
<dbReference type="BioGRID" id="18558">
    <property type="interactions" value="2"/>
</dbReference>
<dbReference type="FunCoup" id="P60300">
    <property type="interactions" value="3087"/>
</dbReference>
<dbReference type="IntAct" id="P60300">
    <property type="interactions" value="1"/>
</dbReference>
<dbReference type="STRING" id="3702.P60300"/>
<dbReference type="PaxDb" id="3702-AT5G33280.1"/>
<dbReference type="ProteomicsDB" id="246713"/>
<dbReference type="EnsemblPlants" id="AT5G33280.1">
    <property type="protein sequence ID" value="AT5G33280.1"/>
    <property type="gene ID" value="AT5G33280"/>
</dbReference>
<dbReference type="GeneID" id="833300"/>
<dbReference type="Gramene" id="AT5G33280.1">
    <property type="protein sequence ID" value="AT5G33280.1"/>
    <property type="gene ID" value="AT5G33280"/>
</dbReference>
<dbReference type="KEGG" id="ath:AT5G33280"/>
<dbReference type="Araport" id="AT5G33280"/>
<dbReference type="TAIR" id="AT5G33280">
    <property type="gene designation" value="CLCG"/>
</dbReference>
<dbReference type="eggNOG" id="KOG0474">
    <property type="taxonomic scope" value="Eukaryota"/>
</dbReference>
<dbReference type="HOGENOM" id="CLU_003181_4_0_1"/>
<dbReference type="InParanoid" id="P60300"/>
<dbReference type="OMA" id="KCDHNGF"/>
<dbReference type="PRO" id="PR:P60300"/>
<dbReference type="Proteomes" id="UP000006548">
    <property type="component" value="Chromosome 5"/>
</dbReference>
<dbReference type="ExpressionAtlas" id="P60300">
    <property type="expression patterns" value="baseline and differential"/>
</dbReference>
<dbReference type="GO" id="GO:0034707">
    <property type="term" value="C:chloride channel complex"/>
    <property type="evidence" value="ECO:0007669"/>
    <property type="project" value="UniProtKB-KW"/>
</dbReference>
<dbReference type="GO" id="GO:0005247">
    <property type="term" value="F:voltage-gated chloride channel activity"/>
    <property type="evidence" value="ECO:0007669"/>
    <property type="project" value="InterPro"/>
</dbReference>
<dbReference type="CDD" id="cd04591">
    <property type="entry name" value="CBS_pair_voltage-gated_CLC_euk_bac"/>
    <property type="match status" value="1"/>
</dbReference>
<dbReference type="FunFam" id="1.10.3080.10:FF:000004">
    <property type="entry name" value="Chloride channel ClC3"/>
    <property type="match status" value="1"/>
</dbReference>
<dbReference type="Gene3D" id="3.10.580.10">
    <property type="entry name" value="CBS-domain"/>
    <property type="match status" value="1"/>
</dbReference>
<dbReference type="Gene3D" id="1.10.3080.10">
    <property type="entry name" value="Clc chloride channel"/>
    <property type="match status" value="1"/>
</dbReference>
<dbReference type="InterPro" id="IPR000644">
    <property type="entry name" value="CBS_dom"/>
</dbReference>
<dbReference type="InterPro" id="IPR046342">
    <property type="entry name" value="CBS_dom_sf"/>
</dbReference>
<dbReference type="InterPro" id="IPR051280">
    <property type="entry name" value="Cl-channel/antiporter"/>
</dbReference>
<dbReference type="InterPro" id="IPR014743">
    <property type="entry name" value="Cl-channel_core"/>
</dbReference>
<dbReference type="InterPro" id="IPR002251">
    <property type="entry name" value="Cl_channel_pln"/>
</dbReference>
<dbReference type="InterPro" id="IPR001807">
    <property type="entry name" value="ClC"/>
</dbReference>
<dbReference type="PANTHER" id="PTHR11689">
    <property type="entry name" value="CHLORIDE CHANNEL PROTEIN CLC FAMILY MEMBER"/>
    <property type="match status" value="1"/>
</dbReference>
<dbReference type="PANTHER" id="PTHR11689:SF92">
    <property type="entry name" value="CHLORIDE CHANNEL-LIKE PROTEIN CLC-G-RELATED"/>
    <property type="match status" value="1"/>
</dbReference>
<dbReference type="Pfam" id="PF00571">
    <property type="entry name" value="CBS"/>
    <property type="match status" value="1"/>
</dbReference>
<dbReference type="Pfam" id="PF00654">
    <property type="entry name" value="Voltage_CLC"/>
    <property type="match status" value="1"/>
</dbReference>
<dbReference type="PRINTS" id="PR00762">
    <property type="entry name" value="CLCHANNEL"/>
</dbReference>
<dbReference type="PRINTS" id="PR01120">
    <property type="entry name" value="CLCHANNELPLT"/>
</dbReference>
<dbReference type="SUPFAM" id="SSF54631">
    <property type="entry name" value="CBS-domain pair"/>
    <property type="match status" value="1"/>
</dbReference>
<dbReference type="SUPFAM" id="SSF81340">
    <property type="entry name" value="Clc chloride channel"/>
    <property type="match status" value="1"/>
</dbReference>
<dbReference type="PROSITE" id="PS51371">
    <property type="entry name" value="CBS"/>
    <property type="match status" value="2"/>
</dbReference>
<protein>
    <recommendedName>
        <fullName>Putative chloride channel-like protein CLC-g</fullName>
    </recommendedName>
    <alternativeName>
        <fullName>CBS domain-containing protein CBSCLC6</fullName>
    </alternativeName>
</protein>
<comment type="function">
    <text>Putative voltage-gated chloride channel.</text>
</comment>
<comment type="subunit">
    <text evidence="1 5">Homodimer (By similarity). Interacts with PP2A5 (PubMed:27676158).</text>
</comment>
<comment type="subcellular location">
    <subcellularLocation>
        <location>Membrane</location>
        <topology>Multi-pass membrane protein</topology>
    </subcellularLocation>
</comment>
<comment type="similarity">
    <text evidence="6">Belongs to the chloride channel (TC 2.A.49) family.</text>
</comment>
<name>CLCG_ARATH</name>
<gene>
    <name type="primary">CLC-G</name>
    <name type="synonym">CBSCLC6</name>
    <name type="ordered locus">At5g33280</name>
    <name type="ORF">F19N02.1</name>
    <name type="ORF">T29A4.90</name>
</gene>
<accession>P60300</accession>
<accession>F4KH90</accession>
<keyword id="KW-0129">CBS domain</keyword>
<keyword id="KW-0868">Chloride</keyword>
<keyword id="KW-0869">Chloride channel</keyword>
<keyword id="KW-0407">Ion channel</keyword>
<keyword id="KW-0406">Ion transport</keyword>
<keyword id="KW-0472">Membrane</keyword>
<keyword id="KW-0597">Phosphoprotein</keyword>
<keyword id="KW-1185">Reference proteome</keyword>
<keyword id="KW-0677">Repeat</keyword>
<keyword id="KW-0812">Transmembrane</keyword>
<keyword id="KW-1133">Transmembrane helix</keyword>
<keyword id="KW-0813">Transport</keyword>
<keyword id="KW-0851">Voltage-gated channel</keyword>
<evidence type="ECO:0000250" key="1"/>
<evidence type="ECO:0000250" key="2">
    <source>
        <dbReference type="UniProtKB" id="Q96282"/>
    </source>
</evidence>
<evidence type="ECO:0000255" key="3"/>
<evidence type="ECO:0000255" key="4">
    <source>
        <dbReference type="PROSITE-ProRule" id="PRU00703"/>
    </source>
</evidence>
<evidence type="ECO:0000269" key="5">
    <source>
    </source>
</evidence>
<evidence type="ECO:0000305" key="6"/>
<feature type="chain" id="PRO_0000094471" description="Putative chloride channel-like protein CLC-g">
    <location>
        <begin position="1"/>
        <end position="765"/>
    </location>
</feature>
<feature type="transmembrane region" description="Helical; Name=1" evidence="3">
    <location>
        <begin position="67"/>
        <end position="87"/>
    </location>
</feature>
<feature type="transmembrane region" description="Helical; Name=2" evidence="3">
    <location>
        <begin position="116"/>
        <end position="136"/>
    </location>
</feature>
<feature type="transmembrane region" description="Helical; Name=3" evidence="3">
    <location>
        <begin position="167"/>
        <end position="187"/>
    </location>
</feature>
<feature type="transmembrane region" description="Helical; Name=4" evidence="3">
    <location>
        <begin position="190"/>
        <end position="210"/>
    </location>
</feature>
<feature type="transmembrane region" description="Helical; Name=5" evidence="3">
    <location>
        <begin position="232"/>
        <end position="252"/>
    </location>
</feature>
<feature type="transmembrane region" description="Helical; Name=6" evidence="3">
    <location>
        <begin position="262"/>
        <end position="282"/>
    </location>
</feature>
<feature type="transmembrane region" description="Helical; Name=7" evidence="3">
    <location>
        <begin position="315"/>
        <end position="335"/>
    </location>
</feature>
<feature type="transmembrane region" description="Helical; Name=8" evidence="3">
    <location>
        <begin position="355"/>
        <end position="375"/>
    </location>
</feature>
<feature type="transmembrane region" description="Helical; Name=9" evidence="3">
    <location>
        <begin position="438"/>
        <end position="458"/>
    </location>
</feature>
<feature type="transmembrane region" description="Helical; Name=10" evidence="3">
    <location>
        <begin position="462"/>
        <end position="482"/>
    </location>
</feature>
<feature type="transmembrane region" description="Helical; Name=11" evidence="3">
    <location>
        <begin position="494"/>
        <end position="514"/>
    </location>
</feature>
<feature type="transmembrane region" description="Helical; Name=12" evidence="3">
    <location>
        <begin position="515"/>
        <end position="535"/>
    </location>
</feature>
<feature type="transmembrane region" description="Helical; Name=13" evidence="3">
    <location>
        <begin position="715"/>
        <end position="735"/>
    </location>
</feature>
<feature type="domain" description="CBS 1" evidence="4">
    <location>
        <begin position="568"/>
        <end position="640"/>
    </location>
</feature>
<feature type="domain" description="CBS 2" evidence="4">
    <location>
        <begin position="687"/>
        <end position="748"/>
    </location>
</feature>
<feature type="modified residue" description="Phosphoserine" evidence="2">
    <location>
        <position position="646"/>
    </location>
</feature>
<organism>
    <name type="scientific">Arabidopsis thaliana</name>
    <name type="common">Mouse-ear cress</name>
    <dbReference type="NCBI Taxonomy" id="3702"/>
    <lineage>
        <taxon>Eukaryota</taxon>
        <taxon>Viridiplantae</taxon>
        <taxon>Streptophyta</taxon>
        <taxon>Embryophyta</taxon>
        <taxon>Tracheophyta</taxon>
        <taxon>Spermatophyta</taxon>
        <taxon>Magnoliopsida</taxon>
        <taxon>eudicotyledons</taxon>
        <taxon>Gunneridae</taxon>
        <taxon>Pentapetalae</taxon>
        <taxon>rosids</taxon>
        <taxon>malvids</taxon>
        <taxon>Brassicales</taxon>
        <taxon>Brassicaceae</taxon>
        <taxon>Camelineae</taxon>
        <taxon>Arabidopsis</taxon>
    </lineage>
</organism>
<proteinExistence type="evidence at protein level"/>
<reference key="1">
    <citation type="journal article" date="2000" name="Nature">
        <title>Sequence and analysis of chromosome 5 of the plant Arabidopsis thaliana.</title>
        <authorList>
            <person name="Tabata S."/>
            <person name="Kaneko T."/>
            <person name="Nakamura Y."/>
            <person name="Kotani H."/>
            <person name="Kato T."/>
            <person name="Asamizu E."/>
            <person name="Miyajima N."/>
            <person name="Sasamoto S."/>
            <person name="Kimura T."/>
            <person name="Hosouchi T."/>
            <person name="Kawashima K."/>
            <person name="Kohara M."/>
            <person name="Matsumoto M."/>
            <person name="Matsuno A."/>
            <person name="Muraki A."/>
            <person name="Nakayama S."/>
            <person name="Nakazaki N."/>
            <person name="Naruo K."/>
            <person name="Okumura S."/>
            <person name="Shinpo S."/>
            <person name="Takeuchi C."/>
            <person name="Wada T."/>
            <person name="Watanabe A."/>
            <person name="Yamada M."/>
            <person name="Yasuda M."/>
            <person name="Sato S."/>
            <person name="de la Bastide M."/>
            <person name="Huang E."/>
            <person name="Spiegel L."/>
            <person name="Gnoj L."/>
            <person name="O'Shaughnessy A."/>
            <person name="Preston R."/>
            <person name="Habermann K."/>
            <person name="Murray J."/>
            <person name="Johnson D."/>
            <person name="Rohlfing T."/>
            <person name="Nelson J."/>
            <person name="Stoneking T."/>
            <person name="Pepin K."/>
            <person name="Spieth J."/>
            <person name="Sekhon M."/>
            <person name="Armstrong J."/>
            <person name="Becker M."/>
            <person name="Belter E."/>
            <person name="Cordum H."/>
            <person name="Cordes M."/>
            <person name="Courtney L."/>
            <person name="Courtney W."/>
            <person name="Dante M."/>
            <person name="Du H."/>
            <person name="Edwards J."/>
            <person name="Fryman J."/>
            <person name="Haakensen B."/>
            <person name="Lamar E."/>
            <person name="Latreille P."/>
            <person name="Leonard S."/>
            <person name="Meyer R."/>
            <person name="Mulvaney E."/>
            <person name="Ozersky P."/>
            <person name="Riley A."/>
            <person name="Strowmatt C."/>
            <person name="Wagner-McPherson C."/>
            <person name="Wollam A."/>
            <person name="Yoakum M."/>
            <person name="Bell M."/>
            <person name="Dedhia N."/>
            <person name="Parnell L."/>
            <person name="Shah R."/>
            <person name="Rodriguez M."/>
            <person name="Hoon See L."/>
            <person name="Vil D."/>
            <person name="Baker J."/>
            <person name="Kirchoff K."/>
            <person name="Toth K."/>
            <person name="King L."/>
            <person name="Bahret A."/>
            <person name="Miller B."/>
            <person name="Marra M.A."/>
            <person name="Martienssen R."/>
            <person name="McCombie W.R."/>
            <person name="Wilson R.K."/>
            <person name="Murphy G."/>
            <person name="Bancroft I."/>
            <person name="Volckaert G."/>
            <person name="Wambutt R."/>
            <person name="Duesterhoeft A."/>
            <person name="Stiekema W."/>
            <person name="Pohl T."/>
            <person name="Entian K.-D."/>
            <person name="Terryn N."/>
            <person name="Hartley N."/>
            <person name="Bent E."/>
            <person name="Johnson S."/>
            <person name="Langham S.-A."/>
            <person name="McCullagh B."/>
            <person name="Robben J."/>
            <person name="Grymonprez B."/>
            <person name="Zimmermann W."/>
            <person name="Ramsperger U."/>
            <person name="Wedler H."/>
            <person name="Balke K."/>
            <person name="Wedler E."/>
            <person name="Peters S."/>
            <person name="van Staveren M."/>
            <person name="Dirkse W."/>
            <person name="Mooijman P."/>
            <person name="Klein Lankhorst R."/>
            <person name="Weitzenegger T."/>
            <person name="Bothe G."/>
            <person name="Rose M."/>
            <person name="Hauf J."/>
            <person name="Berneiser S."/>
            <person name="Hempel S."/>
            <person name="Feldpausch M."/>
            <person name="Lamberth S."/>
            <person name="Villarroel R."/>
            <person name="Gielen J."/>
            <person name="Ardiles W."/>
            <person name="Bents O."/>
            <person name="Lemcke K."/>
            <person name="Kolesov G."/>
            <person name="Mayer K.F.X."/>
            <person name="Rudd S."/>
            <person name="Schoof H."/>
            <person name="Schueller C."/>
            <person name="Zaccaria P."/>
            <person name="Mewes H.-W."/>
            <person name="Bevan M."/>
            <person name="Fransz P.F."/>
        </authorList>
    </citation>
    <scope>NUCLEOTIDE SEQUENCE [LARGE SCALE GENOMIC DNA]</scope>
    <source>
        <strain>cv. Columbia</strain>
    </source>
</reference>
<reference key="2">
    <citation type="journal article" date="2017" name="Plant J.">
        <title>Araport11: a complete reannotation of the Arabidopsis thaliana reference genome.</title>
        <authorList>
            <person name="Cheng C.Y."/>
            <person name="Krishnakumar V."/>
            <person name="Chan A.P."/>
            <person name="Thibaud-Nissen F."/>
            <person name="Schobel S."/>
            <person name="Town C.D."/>
        </authorList>
    </citation>
    <scope>GENOME REANNOTATION</scope>
    <source>
        <strain>cv. Columbia</strain>
    </source>
</reference>
<reference key="3">
    <citation type="journal article" date="2009" name="BMC Genomics">
        <title>Genome wide expression analysis of CBS domain containing proteins in Arabidopsis thaliana (L.) Heynh and Oryza sativa L. reveals their developmental and stress regulation.</title>
        <authorList>
            <person name="Kushwaha H.R."/>
            <person name="Singh A.K."/>
            <person name="Sopory S.K."/>
            <person name="Singla-Pareek S.L."/>
            <person name="Pareek A."/>
        </authorList>
    </citation>
    <scope>GENE FAMILY</scope>
    <scope>NOMENCLATURE</scope>
</reference>
<reference key="4">
    <citation type="journal article" date="2017" name="Plant Cell Environ.">
        <title>Overexpression of PP2A-C5 that encodes the catalytic subunit 5 of protein phosphatase 2A in Arabidopsis confers better root and shoot development under salt conditions.</title>
        <authorList>
            <person name="Hu R."/>
            <person name="Zhu Y."/>
            <person name="Wei J."/>
            <person name="Chen J."/>
            <person name="Shi H."/>
            <person name="Shen G."/>
            <person name="Zhang H."/>
        </authorList>
    </citation>
    <scope>INTERACTION WITH PP2A5</scope>
</reference>